<protein>
    <recommendedName>
        <fullName evidence="1">Large-conductance mechanosensitive channel</fullName>
    </recommendedName>
</protein>
<feature type="chain" id="PRO_1000094885" description="Large-conductance mechanosensitive channel">
    <location>
        <begin position="1"/>
        <end position="149"/>
    </location>
</feature>
<feature type="transmembrane region" description="Helical" evidence="1">
    <location>
        <begin position="16"/>
        <end position="36"/>
    </location>
</feature>
<feature type="transmembrane region" description="Helical" evidence="1">
    <location>
        <begin position="40"/>
        <end position="60"/>
    </location>
</feature>
<feature type="transmembrane region" description="Helical" evidence="1">
    <location>
        <begin position="89"/>
        <end position="109"/>
    </location>
</feature>
<dbReference type="EMBL" id="CP001043">
    <property type="protein sequence ID" value="ACC70182.1"/>
    <property type="molecule type" value="Genomic_DNA"/>
</dbReference>
<dbReference type="RefSeq" id="WP_012400399.1">
    <property type="nucleotide sequence ID" value="NC_010622.1"/>
</dbReference>
<dbReference type="STRING" id="391038.Bphy_0993"/>
<dbReference type="KEGG" id="bph:Bphy_0993"/>
<dbReference type="eggNOG" id="COG1970">
    <property type="taxonomic scope" value="Bacteria"/>
</dbReference>
<dbReference type="HOGENOM" id="CLU_095787_0_1_4"/>
<dbReference type="OrthoDB" id="9810350at2"/>
<dbReference type="Proteomes" id="UP000001192">
    <property type="component" value="Chromosome 1"/>
</dbReference>
<dbReference type="GO" id="GO:0005886">
    <property type="term" value="C:plasma membrane"/>
    <property type="evidence" value="ECO:0007669"/>
    <property type="project" value="UniProtKB-SubCell"/>
</dbReference>
<dbReference type="GO" id="GO:0008381">
    <property type="term" value="F:mechanosensitive monoatomic ion channel activity"/>
    <property type="evidence" value="ECO:0007669"/>
    <property type="project" value="UniProtKB-UniRule"/>
</dbReference>
<dbReference type="Gene3D" id="1.10.1200.120">
    <property type="entry name" value="Large-conductance mechanosensitive channel, MscL, domain 1"/>
    <property type="match status" value="1"/>
</dbReference>
<dbReference type="HAMAP" id="MF_00115">
    <property type="entry name" value="MscL"/>
    <property type="match status" value="1"/>
</dbReference>
<dbReference type="InterPro" id="IPR019823">
    <property type="entry name" value="Mechanosensitive_channel_CS"/>
</dbReference>
<dbReference type="InterPro" id="IPR001185">
    <property type="entry name" value="MS_channel"/>
</dbReference>
<dbReference type="InterPro" id="IPR037673">
    <property type="entry name" value="MSC/AndL"/>
</dbReference>
<dbReference type="InterPro" id="IPR036019">
    <property type="entry name" value="MscL_channel"/>
</dbReference>
<dbReference type="NCBIfam" id="TIGR00220">
    <property type="entry name" value="mscL"/>
    <property type="match status" value="1"/>
</dbReference>
<dbReference type="NCBIfam" id="NF010557">
    <property type="entry name" value="PRK13952.1"/>
    <property type="match status" value="1"/>
</dbReference>
<dbReference type="PANTHER" id="PTHR30266:SF2">
    <property type="entry name" value="LARGE-CONDUCTANCE MECHANOSENSITIVE CHANNEL"/>
    <property type="match status" value="1"/>
</dbReference>
<dbReference type="PANTHER" id="PTHR30266">
    <property type="entry name" value="MECHANOSENSITIVE CHANNEL MSCL"/>
    <property type="match status" value="1"/>
</dbReference>
<dbReference type="Pfam" id="PF01741">
    <property type="entry name" value="MscL"/>
    <property type="match status" value="1"/>
</dbReference>
<dbReference type="PRINTS" id="PR01264">
    <property type="entry name" value="MECHCHANNEL"/>
</dbReference>
<dbReference type="SUPFAM" id="SSF81330">
    <property type="entry name" value="Gated mechanosensitive channel"/>
    <property type="match status" value="1"/>
</dbReference>
<dbReference type="PROSITE" id="PS01327">
    <property type="entry name" value="MSCL"/>
    <property type="match status" value="1"/>
</dbReference>
<name>MSCL_PARP8</name>
<evidence type="ECO:0000255" key="1">
    <source>
        <dbReference type="HAMAP-Rule" id="MF_00115"/>
    </source>
</evidence>
<accession>B2JGJ7</accession>
<gene>
    <name evidence="1" type="primary">mscL</name>
    <name type="ordered locus">Bphy_0993</name>
</gene>
<reference key="1">
    <citation type="journal article" date="2014" name="Stand. Genomic Sci.">
        <title>Complete genome sequence of Burkholderia phymatum STM815(T), a broad host range and efficient nitrogen-fixing symbiont of Mimosa species.</title>
        <authorList>
            <person name="Moulin L."/>
            <person name="Klonowska A."/>
            <person name="Caroline B."/>
            <person name="Booth K."/>
            <person name="Vriezen J.A."/>
            <person name="Melkonian R."/>
            <person name="James E.K."/>
            <person name="Young J.P."/>
            <person name="Bena G."/>
            <person name="Hauser L."/>
            <person name="Land M."/>
            <person name="Kyrpides N."/>
            <person name="Bruce D."/>
            <person name="Chain P."/>
            <person name="Copeland A."/>
            <person name="Pitluck S."/>
            <person name="Woyke T."/>
            <person name="Lizotte-Waniewski M."/>
            <person name="Bristow J."/>
            <person name="Riley M."/>
        </authorList>
    </citation>
    <scope>NUCLEOTIDE SEQUENCE [LARGE SCALE GENOMIC DNA]</scope>
    <source>
        <strain>DSM 17167 / CIP 108236 / LMG 21445 / STM815</strain>
    </source>
</reference>
<proteinExistence type="inferred from homology"/>
<keyword id="KW-0997">Cell inner membrane</keyword>
<keyword id="KW-1003">Cell membrane</keyword>
<keyword id="KW-0407">Ion channel</keyword>
<keyword id="KW-0406">Ion transport</keyword>
<keyword id="KW-0472">Membrane</keyword>
<keyword id="KW-1185">Reference proteome</keyword>
<keyword id="KW-0812">Transmembrane</keyword>
<keyword id="KW-1133">Transmembrane helix</keyword>
<keyword id="KW-0813">Transport</keyword>
<comment type="function">
    <text evidence="1">Channel that opens in response to stretch forces in the membrane lipid bilayer. May participate in the regulation of osmotic pressure changes within the cell.</text>
</comment>
<comment type="subunit">
    <text evidence="1">Homopentamer.</text>
</comment>
<comment type="subcellular location">
    <subcellularLocation>
        <location evidence="1">Cell inner membrane</location>
        <topology evidence="1">Multi-pass membrane protein</topology>
    </subcellularLocation>
</comment>
<comment type="similarity">
    <text evidence="1">Belongs to the MscL family.</text>
</comment>
<sequence>MSLVTEFKEFALKGNVMDLAVGVIIGGAFSTIVNSVVKDLIMPVVGVATGGLDFSNKFILLGHIPPNFKGNPDSYKDLQTAGVAAFGYGSFITVAINFVILALIIFMMVKFINKLRAPAPAEAAAPPPTPEDVLLLREIRDSLKNSPRV</sequence>
<organism>
    <name type="scientific">Paraburkholderia phymatum (strain DSM 17167 / CIP 108236 / LMG 21445 / STM815)</name>
    <name type="common">Burkholderia phymatum</name>
    <dbReference type="NCBI Taxonomy" id="391038"/>
    <lineage>
        <taxon>Bacteria</taxon>
        <taxon>Pseudomonadati</taxon>
        <taxon>Pseudomonadota</taxon>
        <taxon>Betaproteobacteria</taxon>
        <taxon>Burkholderiales</taxon>
        <taxon>Burkholderiaceae</taxon>
        <taxon>Paraburkholderia</taxon>
    </lineage>
</organism>